<reference key="1">
    <citation type="journal article" date="2004" name="Nat. Biotechnol.">
        <title>Complete genome sequence of the metabolically versatile photosynthetic bacterium Rhodopseudomonas palustris.</title>
        <authorList>
            <person name="Larimer F.W."/>
            <person name="Chain P."/>
            <person name="Hauser L."/>
            <person name="Lamerdin J.E."/>
            <person name="Malfatti S."/>
            <person name="Do L."/>
            <person name="Land M.L."/>
            <person name="Pelletier D.A."/>
            <person name="Beatty J.T."/>
            <person name="Lang A.S."/>
            <person name="Tabita F.R."/>
            <person name="Gibson J.L."/>
            <person name="Hanson T.E."/>
            <person name="Bobst C."/>
            <person name="Torres y Torres J.L."/>
            <person name="Peres C."/>
            <person name="Harrison F.H."/>
            <person name="Gibson J."/>
            <person name="Harwood C.S."/>
        </authorList>
    </citation>
    <scope>NUCLEOTIDE SEQUENCE [LARGE SCALE GENOMIC DNA]</scope>
    <source>
        <strain>ATCC BAA-98 / CGA009</strain>
    </source>
</reference>
<evidence type="ECO:0000255" key="1">
    <source>
        <dbReference type="HAMAP-Rule" id="MF_01708"/>
    </source>
</evidence>
<proteinExistence type="inferred from homology"/>
<organism>
    <name type="scientific">Rhodopseudomonas palustris (strain ATCC BAA-98 / CGA009)</name>
    <dbReference type="NCBI Taxonomy" id="258594"/>
    <lineage>
        <taxon>Bacteria</taxon>
        <taxon>Pseudomonadati</taxon>
        <taxon>Pseudomonadota</taxon>
        <taxon>Alphaproteobacteria</taxon>
        <taxon>Hyphomicrobiales</taxon>
        <taxon>Nitrobacteraceae</taxon>
        <taxon>Rhodopseudomonas</taxon>
    </lineage>
</organism>
<gene>
    <name evidence="1" type="primary">lolD2</name>
    <name type="ordered locus">RPA2926</name>
</gene>
<comment type="function">
    <text evidence="1">Part of the ABC transporter complex LolCDE involved in the translocation of mature outer membrane-directed lipoproteins, from the inner membrane to the periplasmic chaperone, LolA. Responsible for the formation of the LolA-lipoprotein complex in an ATP-dependent manner.</text>
</comment>
<comment type="subunit">
    <text evidence="1">The complex is composed of two ATP-binding proteins (LolD) and two transmembrane proteins (LolC and LolE).</text>
</comment>
<comment type="subcellular location">
    <subcellularLocation>
        <location evidence="1">Cell inner membrane</location>
        <topology evidence="1">Peripheral membrane protein</topology>
    </subcellularLocation>
</comment>
<comment type="similarity">
    <text evidence="1">Belongs to the ABC transporter superfamily. Lipoprotein translocase (TC 3.A.1.125) family.</text>
</comment>
<feature type="chain" id="PRO_0000272137" description="Lipoprotein-releasing system ATP-binding protein LolD 2">
    <location>
        <begin position="1"/>
        <end position="232"/>
    </location>
</feature>
<feature type="domain" description="ABC transporter" evidence="1">
    <location>
        <begin position="11"/>
        <end position="231"/>
    </location>
</feature>
<feature type="binding site" evidence="1">
    <location>
        <begin position="47"/>
        <end position="54"/>
    </location>
    <ligand>
        <name>ATP</name>
        <dbReference type="ChEBI" id="CHEBI:30616"/>
    </ligand>
</feature>
<dbReference type="EC" id="7.6.2.-" evidence="1"/>
<dbReference type="EMBL" id="BX572602">
    <property type="protein sequence ID" value="CAE28367.1"/>
    <property type="molecule type" value="Genomic_DNA"/>
</dbReference>
<dbReference type="RefSeq" id="WP_011158475.1">
    <property type="nucleotide sequence ID" value="NZ_CP116810.1"/>
</dbReference>
<dbReference type="SMR" id="Q6N5P8"/>
<dbReference type="STRING" id="258594.RPA2926"/>
<dbReference type="GeneID" id="66894009"/>
<dbReference type="eggNOG" id="COG1136">
    <property type="taxonomic scope" value="Bacteria"/>
</dbReference>
<dbReference type="HOGENOM" id="CLU_000604_1_22_5"/>
<dbReference type="PhylomeDB" id="Q6N5P8"/>
<dbReference type="GO" id="GO:0005886">
    <property type="term" value="C:plasma membrane"/>
    <property type="evidence" value="ECO:0007669"/>
    <property type="project" value="UniProtKB-SubCell"/>
</dbReference>
<dbReference type="GO" id="GO:0005524">
    <property type="term" value="F:ATP binding"/>
    <property type="evidence" value="ECO:0007669"/>
    <property type="project" value="UniProtKB-KW"/>
</dbReference>
<dbReference type="GO" id="GO:0016887">
    <property type="term" value="F:ATP hydrolysis activity"/>
    <property type="evidence" value="ECO:0007669"/>
    <property type="project" value="InterPro"/>
</dbReference>
<dbReference type="GO" id="GO:0022857">
    <property type="term" value="F:transmembrane transporter activity"/>
    <property type="evidence" value="ECO:0007669"/>
    <property type="project" value="TreeGrafter"/>
</dbReference>
<dbReference type="GO" id="GO:0044874">
    <property type="term" value="P:lipoprotein localization to outer membrane"/>
    <property type="evidence" value="ECO:0007669"/>
    <property type="project" value="TreeGrafter"/>
</dbReference>
<dbReference type="GO" id="GO:0089705">
    <property type="term" value="P:protein localization to outer membrane"/>
    <property type="evidence" value="ECO:0007669"/>
    <property type="project" value="TreeGrafter"/>
</dbReference>
<dbReference type="CDD" id="cd03255">
    <property type="entry name" value="ABC_MJ0796_LolCDE_FtsE"/>
    <property type="match status" value="1"/>
</dbReference>
<dbReference type="FunFam" id="3.40.50.300:FF:000032">
    <property type="entry name" value="Export ABC transporter ATP-binding protein"/>
    <property type="match status" value="1"/>
</dbReference>
<dbReference type="Gene3D" id="3.40.50.300">
    <property type="entry name" value="P-loop containing nucleotide triphosphate hydrolases"/>
    <property type="match status" value="1"/>
</dbReference>
<dbReference type="InterPro" id="IPR003593">
    <property type="entry name" value="AAA+_ATPase"/>
</dbReference>
<dbReference type="InterPro" id="IPR003439">
    <property type="entry name" value="ABC_transporter-like_ATP-bd"/>
</dbReference>
<dbReference type="InterPro" id="IPR017871">
    <property type="entry name" value="ABC_transporter-like_CS"/>
</dbReference>
<dbReference type="InterPro" id="IPR015854">
    <property type="entry name" value="ABC_transpr_LolD-like"/>
</dbReference>
<dbReference type="InterPro" id="IPR017911">
    <property type="entry name" value="MacB-like_ATP-bd"/>
</dbReference>
<dbReference type="InterPro" id="IPR027417">
    <property type="entry name" value="P-loop_NTPase"/>
</dbReference>
<dbReference type="PANTHER" id="PTHR24220">
    <property type="entry name" value="IMPORT ATP-BINDING PROTEIN"/>
    <property type="match status" value="1"/>
</dbReference>
<dbReference type="PANTHER" id="PTHR24220:SF689">
    <property type="entry name" value="LIPOPROTEIN-RELEASING SYSTEM ATP-BINDING PROTEIN LOLD"/>
    <property type="match status" value="1"/>
</dbReference>
<dbReference type="Pfam" id="PF00005">
    <property type="entry name" value="ABC_tran"/>
    <property type="match status" value="1"/>
</dbReference>
<dbReference type="SMART" id="SM00382">
    <property type="entry name" value="AAA"/>
    <property type="match status" value="1"/>
</dbReference>
<dbReference type="SUPFAM" id="SSF52540">
    <property type="entry name" value="P-loop containing nucleoside triphosphate hydrolases"/>
    <property type="match status" value="1"/>
</dbReference>
<dbReference type="PROSITE" id="PS00211">
    <property type="entry name" value="ABC_TRANSPORTER_1"/>
    <property type="match status" value="1"/>
</dbReference>
<dbReference type="PROSITE" id="PS50893">
    <property type="entry name" value="ABC_TRANSPORTER_2"/>
    <property type="match status" value="1"/>
</dbReference>
<dbReference type="PROSITE" id="PS51244">
    <property type="entry name" value="LOLD"/>
    <property type="match status" value="1"/>
</dbReference>
<sequence>MEQGAEDIPVVYLHDIKRQYSQGEATLTILDGAKLALWAGQSVALVAPSGSGKSTLLHIAGLLEHPDEGEVYVSGAATSALTDAERTQIRRTDIGFVYQSHRLLPEFTALENVMLPQMIRGLKRKETISRSKEILSYLGLADRITHRPSELSGGEQQRVAIARAVANAPRVLFADEPTGNLDPHTADYVFNALMQLVKATQVAMLIATHNMELAARMDRRVSLQDGVVVELE</sequence>
<protein>
    <recommendedName>
        <fullName evidence="1">Lipoprotein-releasing system ATP-binding protein LolD 2</fullName>
        <ecNumber evidence="1">7.6.2.-</ecNumber>
    </recommendedName>
</protein>
<name>LOLD2_RHOPA</name>
<keyword id="KW-0067">ATP-binding</keyword>
<keyword id="KW-0997">Cell inner membrane</keyword>
<keyword id="KW-1003">Cell membrane</keyword>
<keyword id="KW-0472">Membrane</keyword>
<keyword id="KW-0547">Nucleotide-binding</keyword>
<keyword id="KW-1278">Translocase</keyword>
<keyword id="KW-0813">Transport</keyword>
<accession>Q6N5P8</accession>